<organism>
    <name type="scientific">Methanococcus maripaludis (strain C6 / ATCC BAA-1332)</name>
    <dbReference type="NCBI Taxonomy" id="444158"/>
    <lineage>
        <taxon>Archaea</taxon>
        <taxon>Methanobacteriati</taxon>
        <taxon>Methanobacteriota</taxon>
        <taxon>Methanomada group</taxon>
        <taxon>Methanococci</taxon>
        <taxon>Methanococcales</taxon>
        <taxon>Methanococcaceae</taxon>
        <taxon>Methanococcus</taxon>
    </lineage>
</organism>
<sequence>MNEDIKNNLNNLDEFSGKIIVGLDEAGRGPVIGPMVIASVKINEKDLYKLQDLGLKDSKQLSKKKREELYVKISEICNVKKIVIAPEKIDEQMEITNLNKIELSAFSKLANHFIKENENISIYIDACSSNEQSFSNQFKAKLINKNVEIIAEHKADENYKIVSAASIIAKVTRDNVIEEYKKTFGEIGSGYPSDPKTKKFLKKYVHENKGLPKIARKSWATSKNLLKEIEESKIFQWVK</sequence>
<accession>A9A9T9</accession>
<dbReference type="EC" id="3.1.26.4" evidence="1"/>
<dbReference type="EMBL" id="CP000867">
    <property type="protein sequence ID" value="ABX02112.1"/>
    <property type="molecule type" value="Genomic_DNA"/>
</dbReference>
<dbReference type="SMR" id="A9A9T9"/>
<dbReference type="STRING" id="444158.MmarC6_1299"/>
<dbReference type="KEGG" id="mmx:MmarC6_1299"/>
<dbReference type="eggNOG" id="arCOG04121">
    <property type="taxonomic scope" value="Archaea"/>
</dbReference>
<dbReference type="HOGENOM" id="CLU_036532_0_4_2"/>
<dbReference type="OrthoDB" id="33866at2157"/>
<dbReference type="PhylomeDB" id="A9A9T9"/>
<dbReference type="GO" id="GO:0005737">
    <property type="term" value="C:cytoplasm"/>
    <property type="evidence" value="ECO:0007669"/>
    <property type="project" value="UniProtKB-SubCell"/>
</dbReference>
<dbReference type="GO" id="GO:0032299">
    <property type="term" value="C:ribonuclease H2 complex"/>
    <property type="evidence" value="ECO:0007669"/>
    <property type="project" value="TreeGrafter"/>
</dbReference>
<dbReference type="GO" id="GO:0030145">
    <property type="term" value="F:manganese ion binding"/>
    <property type="evidence" value="ECO:0007669"/>
    <property type="project" value="UniProtKB-UniRule"/>
</dbReference>
<dbReference type="GO" id="GO:0003723">
    <property type="term" value="F:RNA binding"/>
    <property type="evidence" value="ECO:0007669"/>
    <property type="project" value="InterPro"/>
</dbReference>
<dbReference type="GO" id="GO:0004523">
    <property type="term" value="F:RNA-DNA hybrid ribonuclease activity"/>
    <property type="evidence" value="ECO:0007669"/>
    <property type="project" value="UniProtKB-UniRule"/>
</dbReference>
<dbReference type="GO" id="GO:0043137">
    <property type="term" value="P:DNA replication, removal of RNA primer"/>
    <property type="evidence" value="ECO:0007669"/>
    <property type="project" value="TreeGrafter"/>
</dbReference>
<dbReference type="GO" id="GO:0006298">
    <property type="term" value="P:mismatch repair"/>
    <property type="evidence" value="ECO:0007669"/>
    <property type="project" value="TreeGrafter"/>
</dbReference>
<dbReference type="CDD" id="cd07180">
    <property type="entry name" value="RNase_HII_archaea_like"/>
    <property type="match status" value="1"/>
</dbReference>
<dbReference type="FunFam" id="1.10.10.460:FF:000001">
    <property type="entry name" value="Ribonuclease"/>
    <property type="match status" value="1"/>
</dbReference>
<dbReference type="Gene3D" id="3.30.420.10">
    <property type="entry name" value="Ribonuclease H-like superfamily/Ribonuclease H"/>
    <property type="match status" value="1"/>
</dbReference>
<dbReference type="Gene3D" id="1.10.10.460">
    <property type="entry name" value="Ribonuclease hii. Domain 2"/>
    <property type="match status" value="1"/>
</dbReference>
<dbReference type="HAMAP" id="MF_00052_A">
    <property type="entry name" value="RNase_HII_A"/>
    <property type="match status" value="1"/>
</dbReference>
<dbReference type="InterPro" id="IPR004649">
    <property type="entry name" value="RNase_H2_suA"/>
</dbReference>
<dbReference type="InterPro" id="IPR001352">
    <property type="entry name" value="RNase_HII/HIII"/>
</dbReference>
<dbReference type="InterPro" id="IPR024567">
    <property type="entry name" value="RNase_HII/HIII_dom"/>
</dbReference>
<dbReference type="InterPro" id="IPR020787">
    <property type="entry name" value="RNase_HII_arc"/>
</dbReference>
<dbReference type="InterPro" id="IPR023160">
    <property type="entry name" value="RNase_HII_hlx-loop-hlx_cap_dom"/>
</dbReference>
<dbReference type="InterPro" id="IPR012337">
    <property type="entry name" value="RNaseH-like_sf"/>
</dbReference>
<dbReference type="InterPro" id="IPR036397">
    <property type="entry name" value="RNaseH_sf"/>
</dbReference>
<dbReference type="NCBIfam" id="TIGR00729">
    <property type="entry name" value="ribonuclease HII"/>
    <property type="match status" value="1"/>
</dbReference>
<dbReference type="PANTHER" id="PTHR10954:SF23">
    <property type="entry name" value="RIBONUCLEASE"/>
    <property type="match status" value="1"/>
</dbReference>
<dbReference type="PANTHER" id="PTHR10954">
    <property type="entry name" value="RIBONUCLEASE H2 SUBUNIT A"/>
    <property type="match status" value="1"/>
</dbReference>
<dbReference type="Pfam" id="PF01351">
    <property type="entry name" value="RNase_HII"/>
    <property type="match status" value="1"/>
</dbReference>
<dbReference type="SUPFAM" id="SSF53098">
    <property type="entry name" value="Ribonuclease H-like"/>
    <property type="match status" value="1"/>
</dbReference>
<dbReference type="PROSITE" id="PS51975">
    <property type="entry name" value="RNASE_H_2"/>
    <property type="match status" value="1"/>
</dbReference>
<reference key="1">
    <citation type="submission" date="2007-10" db="EMBL/GenBank/DDBJ databases">
        <title>Complete sequence of Methanococcus maripaludis C6.</title>
        <authorList>
            <consortium name="US DOE Joint Genome Institute"/>
            <person name="Copeland A."/>
            <person name="Lucas S."/>
            <person name="Lapidus A."/>
            <person name="Barry K."/>
            <person name="Glavina del Rio T."/>
            <person name="Dalin E."/>
            <person name="Tice H."/>
            <person name="Pitluck S."/>
            <person name="Clum A."/>
            <person name="Schmutz J."/>
            <person name="Larimer F."/>
            <person name="Land M."/>
            <person name="Hauser L."/>
            <person name="Kyrpides N."/>
            <person name="Mikhailova N."/>
            <person name="Sieprawska-Lupa M."/>
            <person name="Whitman W.B."/>
            <person name="Richardson P."/>
        </authorList>
    </citation>
    <scope>NUCLEOTIDE SEQUENCE [LARGE SCALE GENOMIC DNA]</scope>
    <source>
        <strain>C6 / ATCC BAA-1332</strain>
    </source>
</reference>
<gene>
    <name evidence="1" type="primary">rnhB</name>
    <name type="ordered locus">MmarC6_1299</name>
</gene>
<proteinExistence type="inferred from homology"/>
<name>RNH2_METM6</name>
<evidence type="ECO:0000255" key="1">
    <source>
        <dbReference type="HAMAP-Rule" id="MF_00052"/>
    </source>
</evidence>
<evidence type="ECO:0000255" key="2">
    <source>
        <dbReference type="PROSITE-ProRule" id="PRU01319"/>
    </source>
</evidence>
<feature type="chain" id="PRO_1000091634" description="Ribonuclease HII">
    <location>
        <begin position="1"/>
        <end position="239"/>
    </location>
</feature>
<feature type="domain" description="RNase H type-2" evidence="2">
    <location>
        <begin position="18"/>
        <end position="231"/>
    </location>
</feature>
<feature type="binding site" evidence="1">
    <location>
        <position position="24"/>
    </location>
    <ligand>
        <name>a divalent metal cation</name>
        <dbReference type="ChEBI" id="CHEBI:60240"/>
    </ligand>
</feature>
<feature type="binding site" evidence="1">
    <location>
        <position position="25"/>
    </location>
    <ligand>
        <name>a divalent metal cation</name>
        <dbReference type="ChEBI" id="CHEBI:60240"/>
    </ligand>
</feature>
<feature type="binding site" evidence="1">
    <location>
        <position position="125"/>
    </location>
    <ligand>
        <name>a divalent metal cation</name>
        <dbReference type="ChEBI" id="CHEBI:60240"/>
    </ligand>
</feature>
<comment type="function">
    <text evidence="1">Endonuclease that specifically degrades the RNA of RNA-DNA hybrids.</text>
</comment>
<comment type="catalytic activity">
    <reaction evidence="1">
        <text>Endonucleolytic cleavage to 5'-phosphomonoester.</text>
        <dbReference type="EC" id="3.1.26.4"/>
    </reaction>
</comment>
<comment type="cofactor">
    <cofactor evidence="1">
        <name>Mn(2+)</name>
        <dbReference type="ChEBI" id="CHEBI:29035"/>
    </cofactor>
    <cofactor evidence="1">
        <name>Mg(2+)</name>
        <dbReference type="ChEBI" id="CHEBI:18420"/>
    </cofactor>
    <text evidence="1">Manganese or magnesium. Binds 1 divalent metal ion per monomer in the absence of substrate. May bind a second metal ion after substrate binding.</text>
</comment>
<comment type="subcellular location">
    <subcellularLocation>
        <location evidence="1">Cytoplasm</location>
    </subcellularLocation>
</comment>
<comment type="similarity">
    <text evidence="1">Belongs to the RNase HII family.</text>
</comment>
<protein>
    <recommendedName>
        <fullName evidence="1">Ribonuclease HII</fullName>
        <shortName evidence="1">RNase HII</shortName>
        <ecNumber evidence="1">3.1.26.4</ecNumber>
    </recommendedName>
</protein>
<keyword id="KW-0963">Cytoplasm</keyword>
<keyword id="KW-0255">Endonuclease</keyword>
<keyword id="KW-0378">Hydrolase</keyword>
<keyword id="KW-0464">Manganese</keyword>
<keyword id="KW-0479">Metal-binding</keyword>
<keyword id="KW-0540">Nuclease</keyword>